<protein>
    <recommendedName>
        <fullName>UPF0758 protein STH371</fullName>
    </recommendedName>
</protein>
<reference key="1">
    <citation type="journal article" date="2004" name="Nucleic Acids Res.">
        <title>Genome sequence of Symbiobacterium thermophilum, an uncultivable bacterium that depends on microbial commensalism.</title>
        <authorList>
            <person name="Ueda K."/>
            <person name="Yamashita A."/>
            <person name="Ishikawa J."/>
            <person name="Shimada M."/>
            <person name="Watsuji T."/>
            <person name="Morimura K."/>
            <person name="Ikeda H."/>
            <person name="Hattori M."/>
            <person name="Beppu T."/>
        </authorList>
    </citation>
    <scope>NUCLEOTIDE SEQUENCE [LARGE SCALE GENOMIC DNA]</scope>
    <source>
        <strain>DSM 24528 / JCM 14929 / IAM 14863 / T</strain>
    </source>
</reference>
<organism>
    <name type="scientific">Symbiobacterium thermophilum (strain DSM 24528 / JCM 14929 / IAM 14863 / T)</name>
    <dbReference type="NCBI Taxonomy" id="292459"/>
    <lineage>
        <taxon>Bacteria</taxon>
        <taxon>Bacillati</taxon>
        <taxon>Bacillota</taxon>
        <taxon>Clostridia</taxon>
        <taxon>Eubacteriales</taxon>
        <taxon>Symbiobacteriaceae</taxon>
        <taxon>Symbiobacterium</taxon>
    </lineage>
</organism>
<comment type="similarity">
    <text evidence="2">Belongs to the UPF0758 family.</text>
</comment>
<keyword id="KW-0378">Hydrolase</keyword>
<keyword id="KW-0479">Metal-binding</keyword>
<keyword id="KW-0482">Metalloprotease</keyword>
<keyword id="KW-0645">Protease</keyword>
<keyword id="KW-1185">Reference proteome</keyword>
<keyword id="KW-0862">Zinc</keyword>
<dbReference type="EMBL" id="AP006840">
    <property type="protein sequence ID" value="BAD39356.1"/>
    <property type="molecule type" value="Genomic_DNA"/>
</dbReference>
<dbReference type="RefSeq" id="WP_011194505.1">
    <property type="nucleotide sequence ID" value="NC_006177.1"/>
</dbReference>
<dbReference type="SMR" id="Q67SI7"/>
<dbReference type="STRING" id="292459.STH371"/>
<dbReference type="KEGG" id="sth:STH371"/>
<dbReference type="eggNOG" id="COG2003">
    <property type="taxonomic scope" value="Bacteria"/>
</dbReference>
<dbReference type="HOGENOM" id="CLU_073529_0_2_9"/>
<dbReference type="Proteomes" id="UP000000417">
    <property type="component" value="Chromosome"/>
</dbReference>
<dbReference type="GO" id="GO:0046872">
    <property type="term" value="F:metal ion binding"/>
    <property type="evidence" value="ECO:0007669"/>
    <property type="project" value="UniProtKB-KW"/>
</dbReference>
<dbReference type="GO" id="GO:0008237">
    <property type="term" value="F:metallopeptidase activity"/>
    <property type="evidence" value="ECO:0007669"/>
    <property type="project" value="UniProtKB-KW"/>
</dbReference>
<dbReference type="GO" id="GO:0006508">
    <property type="term" value="P:proteolysis"/>
    <property type="evidence" value="ECO:0007669"/>
    <property type="project" value="UniProtKB-KW"/>
</dbReference>
<dbReference type="CDD" id="cd08071">
    <property type="entry name" value="MPN_DUF2466"/>
    <property type="match status" value="1"/>
</dbReference>
<dbReference type="Gene3D" id="3.40.140.10">
    <property type="entry name" value="Cytidine Deaminase, domain 2"/>
    <property type="match status" value="1"/>
</dbReference>
<dbReference type="InterPro" id="IPR037518">
    <property type="entry name" value="MPN"/>
</dbReference>
<dbReference type="InterPro" id="IPR025657">
    <property type="entry name" value="RadC_JAB"/>
</dbReference>
<dbReference type="InterPro" id="IPR001405">
    <property type="entry name" value="UPF0758"/>
</dbReference>
<dbReference type="InterPro" id="IPR020891">
    <property type="entry name" value="UPF0758_CS"/>
</dbReference>
<dbReference type="InterPro" id="IPR046778">
    <property type="entry name" value="UPF0758_N"/>
</dbReference>
<dbReference type="NCBIfam" id="NF000642">
    <property type="entry name" value="PRK00024.1"/>
    <property type="match status" value="1"/>
</dbReference>
<dbReference type="NCBIfam" id="TIGR00608">
    <property type="entry name" value="radc"/>
    <property type="match status" value="1"/>
</dbReference>
<dbReference type="PANTHER" id="PTHR30471">
    <property type="entry name" value="DNA REPAIR PROTEIN RADC"/>
    <property type="match status" value="1"/>
</dbReference>
<dbReference type="PANTHER" id="PTHR30471:SF3">
    <property type="entry name" value="UPF0758 PROTEIN YEES-RELATED"/>
    <property type="match status" value="1"/>
</dbReference>
<dbReference type="Pfam" id="PF04002">
    <property type="entry name" value="RadC"/>
    <property type="match status" value="1"/>
</dbReference>
<dbReference type="Pfam" id="PF20582">
    <property type="entry name" value="UPF0758_N"/>
    <property type="match status" value="1"/>
</dbReference>
<dbReference type="SUPFAM" id="SSF102712">
    <property type="entry name" value="JAB1/MPN domain"/>
    <property type="match status" value="1"/>
</dbReference>
<dbReference type="PROSITE" id="PS50249">
    <property type="entry name" value="MPN"/>
    <property type="match status" value="1"/>
</dbReference>
<dbReference type="PROSITE" id="PS01302">
    <property type="entry name" value="UPF0758"/>
    <property type="match status" value="1"/>
</dbReference>
<feature type="chain" id="PRO_1000070982" description="UPF0758 protein STH371">
    <location>
        <begin position="1"/>
        <end position="234"/>
    </location>
</feature>
<feature type="domain" description="MPN" evidence="1">
    <location>
        <begin position="110"/>
        <end position="232"/>
    </location>
</feature>
<feature type="short sequence motif" description="JAMM motif" evidence="1">
    <location>
        <begin position="181"/>
        <end position="194"/>
    </location>
</feature>
<feature type="binding site" evidence="1">
    <location>
        <position position="181"/>
    </location>
    <ligand>
        <name>Zn(2+)</name>
        <dbReference type="ChEBI" id="CHEBI:29105"/>
        <note>catalytic</note>
    </ligand>
</feature>
<feature type="binding site" evidence="1">
    <location>
        <position position="183"/>
    </location>
    <ligand>
        <name>Zn(2+)</name>
        <dbReference type="ChEBI" id="CHEBI:29105"/>
        <note>catalytic</note>
    </ligand>
</feature>
<feature type="binding site" evidence="1">
    <location>
        <position position="194"/>
    </location>
    <ligand>
        <name>Zn(2+)</name>
        <dbReference type="ChEBI" id="CHEBI:29105"/>
        <note>catalytic</note>
    </ligand>
</feature>
<evidence type="ECO:0000255" key="1">
    <source>
        <dbReference type="PROSITE-ProRule" id="PRU01182"/>
    </source>
</evidence>
<evidence type="ECO:0000305" key="2"/>
<accession>Q67SI7</accession>
<proteinExistence type="inferred from homology"/>
<sequence>MTPSLKRLPEADRPRERLLRLGPEKLSDVELLAILLGTGSRGRSVIEVARDLLHHCEAKDPGGGLRALLHLRDAERSELVKGLGPAKVCTILAGLHLGLRASAAPLRRVDLCNPRAVFEFLAPRMAHLSIEQFHVILLNAKNQVIDVECVSEGTLTASLVHPREVFKTAIRRSAHAVILAHNHPSGDPTPSREDREITRRLVQAGRVIGIEVLDHLVVGQGGYTSFRERGLLTG</sequence>
<gene>
    <name type="ordered locus">STH371</name>
</gene>
<name>Y371_SYMTH</name>